<feature type="chain" id="PRO_0000159137" description="Uncharacterized ferredoxin MJ0265">
    <location>
        <begin position="1"/>
        <end position="166"/>
    </location>
</feature>
<feature type="domain" description="4Fe-4S ferredoxin-type 1" evidence="2">
    <location>
        <begin position="3"/>
        <end position="33"/>
    </location>
</feature>
<feature type="domain" description="4Fe-4S ferredoxin-type 2" evidence="2">
    <location>
        <begin position="37"/>
        <end position="67"/>
    </location>
</feature>
<feature type="domain" description="4Fe-4S ferredoxin-type 3" evidence="2">
    <location>
        <begin position="68"/>
        <end position="97"/>
    </location>
</feature>
<feature type="binding site" evidence="1">
    <location>
        <position position="13"/>
    </location>
    <ligand>
        <name>[4Fe-4S] cluster</name>
        <dbReference type="ChEBI" id="CHEBI:49883"/>
        <label>1</label>
    </ligand>
</feature>
<feature type="binding site" evidence="1">
    <location>
        <position position="16"/>
    </location>
    <ligand>
        <name>[4Fe-4S] cluster</name>
        <dbReference type="ChEBI" id="CHEBI:49883"/>
        <label>1</label>
    </ligand>
</feature>
<feature type="binding site" evidence="1">
    <location>
        <position position="19"/>
    </location>
    <ligand>
        <name>[4Fe-4S] cluster</name>
        <dbReference type="ChEBI" id="CHEBI:49883"/>
        <label>1</label>
    </ligand>
</feature>
<feature type="binding site" evidence="1">
    <location>
        <position position="23"/>
    </location>
    <ligand>
        <name>[4Fe-4S] cluster</name>
        <dbReference type="ChEBI" id="CHEBI:49883"/>
        <label>2</label>
    </ligand>
</feature>
<feature type="binding site" evidence="1">
    <location>
        <position position="46"/>
    </location>
    <ligand>
        <name>[4Fe-4S] cluster</name>
        <dbReference type="ChEBI" id="CHEBI:49883"/>
        <label>3</label>
    </ligand>
</feature>
<feature type="binding site" evidence="1">
    <location>
        <position position="49"/>
    </location>
    <ligand>
        <name>[4Fe-4S] cluster</name>
        <dbReference type="ChEBI" id="CHEBI:49883"/>
        <label>3</label>
    </ligand>
</feature>
<feature type="binding site" evidence="1">
    <location>
        <position position="54"/>
    </location>
    <ligand>
        <name>[4Fe-4S] cluster</name>
        <dbReference type="ChEBI" id="CHEBI:49883"/>
        <label>3</label>
    </ligand>
</feature>
<feature type="binding site" evidence="1">
    <location>
        <position position="58"/>
    </location>
    <ligand>
        <name>[4Fe-4S] cluster</name>
        <dbReference type="ChEBI" id="CHEBI:49883"/>
        <label>4</label>
    </ligand>
</feature>
<feature type="binding site" evidence="1">
    <location>
        <position position="77"/>
    </location>
    <ligand>
        <name>[4Fe-4S] cluster</name>
        <dbReference type="ChEBI" id="CHEBI:49883"/>
        <label>4</label>
    </ligand>
</feature>
<feature type="binding site" evidence="1">
    <location>
        <position position="80"/>
    </location>
    <ligand>
        <name>[4Fe-4S] cluster</name>
        <dbReference type="ChEBI" id="CHEBI:49883"/>
        <label>4</label>
    </ligand>
</feature>
<feature type="binding site" evidence="1">
    <location>
        <position position="83"/>
    </location>
    <ligand>
        <name>[4Fe-4S] cluster</name>
        <dbReference type="ChEBI" id="CHEBI:49883"/>
        <label>4</label>
    </ligand>
</feature>
<feature type="binding site" evidence="1">
    <location>
        <position position="87"/>
    </location>
    <ligand>
        <name>[4Fe-4S] cluster</name>
        <dbReference type="ChEBI" id="CHEBI:49883"/>
        <label>3</label>
    </ligand>
</feature>
<feature type="binding site" evidence="1">
    <location>
        <position position="101"/>
    </location>
    <ligand>
        <name>[4Fe-4S] cluster</name>
        <dbReference type="ChEBI" id="CHEBI:49883"/>
        <label>2</label>
    </ligand>
</feature>
<feature type="binding site" evidence="1">
    <location>
        <position position="104"/>
    </location>
    <ligand>
        <name>[4Fe-4S] cluster</name>
        <dbReference type="ChEBI" id="CHEBI:49883"/>
        <label>2</label>
    </ligand>
</feature>
<feature type="binding site" evidence="1">
    <location>
        <position position="111"/>
    </location>
    <ligand>
        <name>[4Fe-4S] cluster</name>
        <dbReference type="ChEBI" id="CHEBI:49883"/>
        <label>2</label>
    </ligand>
</feature>
<feature type="binding site" evidence="1">
    <location>
        <position position="115"/>
    </location>
    <ligand>
        <name>[4Fe-4S] cluster</name>
        <dbReference type="ChEBI" id="CHEBI:49883"/>
        <label>1</label>
    </ligand>
</feature>
<evidence type="ECO:0000250" key="1"/>
<evidence type="ECO:0000255" key="2">
    <source>
        <dbReference type="PROSITE-ProRule" id="PRU00711"/>
    </source>
</evidence>
<organism>
    <name type="scientific">Methanocaldococcus jannaschii (strain ATCC 43067 / DSM 2661 / JAL-1 / JCM 10045 / NBRC 100440)</name>
    <name type="common">Methanococcus jannaschii</name>
    <dbReference type="NCBI Taxonomy" id="243232"/>
    <lineage>
        <taxon>Archaea</taxon>
        <taxon>Methanobacteriati</taxon>
        <taxon>Methanobacteriota</taxon>
        <taxon>Methanomada group</taxon>
        <taxon>Methanococci</taxon>
        <taxon>Methanococcales</taxon>
        <taxon>Methanocaldococcaceae</taxon>
        <taxon>Methanocaldococcus</taxon>
    </lineage>
</organism>
<dbReference type="EMBL" id="L77117">
    <property type="protein sequence ID" value="AAB98252.1"/>
    <property type="molecule type" value="Genomic_DNA"/>
</dbReference>
<dbReference type="SMR" id="Q57713"/>
<dbReference type="FunCoup" id="Q57713">
    <property type="interactions" value="90"/>
</dbReference>
<dbReference type="STRING" id="243232.MJ_0265"/>
<dbReference type="PaxDb" id="243232-MJ_0265"/>
<dbReference type="EnsemblBacteria" id="AAB98252">
    <property type="protein sequence ID" value="AAB98252"/>
    <property type="gene ID" value="MJ_0265"/>
</dbReference>
<dbReference type="KEGG" id="mja:MJ_0265"/>
<dbReference type="eggNOG" id="arCOG01502">
    <property type="taxonomic scope" value="Archaea"/>
</dbReference>
<dbReference type="HOGENOM" id="CLU_043374_3_3_2"/>
<dbReference type="InParanoid" id="Q57713"/>
<dbReference type="PhylomeDB" id="Q57713"/>
<dbReference type="Proteomes" id="UP000000805">
    <property type="component" value="Chromosome"/>
</dbReference>
<dbReference type="GO" id="GO:0051539">
    <property type="term" value="F:4 iron, 4 sulfur cluster binding"/>
    <property type="evidence" value="ECO:0007669"/>
    <property type="project" value="UniProtKB-KW"/>
</dbReference>
<dbReference type="GO" id="GO:0046872">
    <property type="term" value="F:metal ion binding"/>
    <property type="evidence" value="ECO:0007669"/>
    <property type="project" value="UniProtKB-KW"/>
</dbReference>
<dbReference type="GO" id="GO:0016491">
    <property type="term" value="F:oxidoreductase activity"/>
    <property type="evidence" value="ECO:0007669"/>
    <property type="project" value="UniProtKB-ARBA"/>
</dbReference>
<dbReference type="CDD" id="cd04410">
    <property type="entry name" value="DMSOR_beta-like"/>
    <property type="match status" value="1"/>
</dbReference>
<dbReference type="Gene3D" id="3.30.70.20">
    <property type="match status" value="2"/>
</dbReference>
<dbReference type="InterPro" id="IPR017896">
    <property type="entry name" value="4Fe4S_Fe-S-bd"/>
</dbReference>
<dbReference type="InterPro" id="IPR017900">
    <property type="entry name" value="4Fe4S_Fe_S_CS"/>
</dbReference>
<dbReference type="InterPro" id="IPR050294">
    <property type="entry name" value="RnfB_subfamily"/>
</dbReference>
<dbReference type="PANTHER" id="PTHR42859:SF10">
    <property type="entry name" value="DIMETHYLSULFOXIDE REDUCTASE CHAIN B"/>
    <property type="match status" value="1"/>
</dbReference>
<dbReference type="PANTHER" id="PTHR42859">
    <property type="entry name" value="OXIDOREDUCTASE"/>
    <property type="match status" value="1"/>
</dbReference>
<dbReference type="Pfam" id="PF13247">
    <property type="entry name" value="Fer4_11"/>
    <property type="match status" value="1"/>
</dbReference>
<dbReference type="SUPFAM" id="SSF54862">
    <property type="entry name" value="4Fe-4S ferredoxins"/>
    <property type="match status" value="1"/>
</dbReference>
<dbReference type="PROSITE" id="PS00198">
    <property type="entry name" value="4FE4S_FER_1"/>
    <property type="match status" value="1"/>
</dbReference>
<dbReference type="PROSITE" id="PS51379">
    <property type="entry name" value="4FE4S_FER_2"/>
    <property type="match status" value="3"/>
</dbReference>
<proteinExistence type="inferred from homology"/>
<gene>
    <name type="ordered locus">MJ0265</name>
</gene>
<comment type="cofactor">
    <cofactor evidence="1">
        <name>[4Fe-4S] cluster</name>
        <dbReference type="ChEBI" id="CHEBI:49883"/>
    </cofactor>
    <text evidence="1">Binds 4 [4Fe-4S] clusters.</text>
</comment>
<keyword id="KW-0004">4Fe-4S</keyword>
<keyword id="KW-0249">Electron transport</keyword>
<keyword id="KW-0408">Iron</keyword>
<keyword id="KW-0411">Iron-sulfur</keyword>
<keyword id="KW-0479">Metal-binding</keyword>
<keyword id="KW-1185">Reference proteome</keyword>
<keyword id="KW-0677">Repeat</keyword>
<keyword id="KW-0813">Transport</keyword>
<name>FER9_METJA</name>
<accession>Q57713</accession>
<protein>
    <recommendedName>
        <fullName>Uncharacterized ferredoxin MJ0265</fullName>
    </recommendedName>
</protein>
<reference key="1">
    <citation type="journal article" date="1996" name="Science">
        <title>Complete genome sequence of the methanogenic archaeon, Methanococcus jannaschii.</title>
        <authorList>
            <person name="Bult C.J."/>
            <person name="White O."/>
            <person name="Olsen G.J."/>
            <person name="Zhou L."/>
            <person name="Fleischmann R.D."/>
            <person name="Sutton G.G."/>
            <person name="Blake J.A."/>
            <person name="FitzGerald L.M."/>
            <person name="Clayton R.A."/>
            <person name="Gocayne J.D."/>
            <person name="Kerlavage A.R."/>
            <person name="Dougherty B.A."/>
            <person name="Tomb J.-F."/>
            <person name="Adams M.D."/>
            <person name="Reich C.I."/>
            <person name="Overbeek R."/>
            <person name="Kirkness E.F."/>
            <person name="Weinstock K.G."/>
            <person name="Merrick J.M."/>
            <person name="Glodek A."/>
            <person name="Scott J.L."/>
            <person name="Geoghagen N.S.M."/>
            <person name="Weidman J.F."/>
            <person name="Fuhrmann J.L."/>
            <person name="Nguyen D."/>
            <person name="Utterback T.R."/>
            <person name="Kelley J.M."/>
            <person name="Peterson J.D."/>
            <person name="Sadow P.W."/>
            <person name="Hanna M.C."/>
            <person name="Cotton M.D."/>
            <person name="Roberts K.M."/>
            <person name="Hurst M.A."/>
            <person name="Kaine B.P."/>
            <person name="Borodovsky M."/>
            <person name="Klenk H.-P."/>
            <person name="Fraser C.M."/>
            <person name="Smith H.O."/>
            <person name="Woese C.R."/>
            <person name="Venter J.C."/>
        </authorList>
    </citation>
    <scope>NUCLEOTIDE SEQUENCE [LARGE SCALE GENOMIC DNA]</scope>
    <source>
        <strain>ATCC 43067 / DSM 2661 / JAL-1 / JCM 10045 / NBRC 100440</strain>
    </source>
</reference>
<sequence>MVMKKIIMTNFNCDNCGDCVKACMEKNKVGRIAIMEKDGKYIPIVCQHCASAPCKEVCPVSAIEHKDGYVYLNEDVCIGCGLCALACPFGAILMEDKAYKCILCNGDEPACVKACSKRCLELVDVNELIFAKRDKSLDLFSKMSLPTQKSDNSLISKITIDAKVKP</sequence>